<accession>Q8QLK1</accession>
<reference key="1">
    <citation type="journal article" date="2002" name="Virology">
        <title>Sequence and organization of the Mamestra configurata nucleopolyhedrovirus genome.</title>
        <authorList>
            <person name="Li Q."/>
            <person name="Donly C."/>
            <person name="Li L."/>
            <person name="Willis L.G."/>
            <person name="Theilmann D.A."/>
            <person name="Erlandson M."/>
        </authorList>
    </citation>
    <scope>NUCLEOTIDE SEQUENCE [LARGE SCALE GENOMIC DNA]</scope>
    <source>
        <strain>90/2</strain>
    </source>
</reference>
<evidence type="ECO:0000250" key="1"/>
<evidence type="ECO:0000255" key="2"/>
<evidence type="ECO:0000255" key="3">
    <source>
        <dbReference type="PROSITE-ProRule" id="PRU10088"/>
    </source>
</evidence>
<evidence type="ECO:0000255" key="4">
    <source>
        <dbReference type="PROSITE-ProRule" id="PRU10089"/>
    </source>
</evidence>
<evidence type="ECO:0000255" key="5">
    <source>
        <dbReference type="PROSITE-ProRule" id="PRU10090"/>
    </source>
</evidence>
<protein>
    <recommendedName>
        <fullName>Viral cathepsin</fullName>
        <shortName>V-cath</shortName>
        <ecNumber>3.4.22.50</ecNumber>
    </recommendedName>
    <alternativeName>
        <fullName>Cysteine proteinase</fullName>
        <shortName>CP</shortName>
    </alternativeName>
</protein>
<organismHost>
    <name type="scientific">Mamestra configurata</name>
    <name type="common">bertha armyworm</name>
    <dbReference type="NCBI Taxonomy" id="174822"/>
</organismHost>
<keyword id="KW-1015">Disulfide bond</keyword>
<keyword id="KW-0378">Hydrolase</keyword>
<keyword id="KW-0645">Protease</keyword>
<keyword id="KW-0732">Signal</keyword>
<keyword id="KW-0788">Thiol protease</keyword>
<keyword id="KW-0865">Zymogen</keyword>
<feature type="signal peptide" evidence="2">
    <location>
        <begin position="1"/>
        <end position="16"/>
    </location>
</feature>
<feature type="propeptide" id="PRO_0000322213" description="Activation peptide" evidence="2">
    <location>
        <begin position="17"/>
        <end position="126"/>
    </location>
</feature>
<feature type="chain" id="PRO_0000050583" description="Viral cathepsin">
    <location>
        <begin position="127"/>
        <end position="337"/>
    </location>
</feature>
<feature type="active site" evidence="1">
    <location>
        <position position="150"/>
    </location>
</feature>
<feature type="active site" evidence="1">
    <location>
        <position position="283"/>
    </location>
</feature>
<feature type="active site" evidence="1">
    <location>
        <position position="303"/>
    </location>
</feature>
<feature type="disulfide bond" evidence="1">
    <location>
        <begin position="147"/>
        <end position="188"/>
    </location>
</feature>
<feature type="disulfide bond" evidence="1">
    <location>
        <begin position="181"/>
        <end position="221"/>
    </location>
</feature>
<feature type="disulfide bond" evidence="1">
    <location>
        <begin position="276"/>
        <end position="324"/>
    </location>
</feature>
<name>CATV_NPVMC</name>
<organism>
    <name type="scientific">Mamestra configurata nucleopolyhedrovirus</name>
    <name type="common">MacoNPV</name>
    <dbReference type="NCBI Taxonomy" id="207830"/>
    <lineage>
        <taxon>Viruses</taxon>
        <taxon>Viruses incertae sedis</taxon>
        <taxon>Naldaviricetes</taxon>
        <taxon>Lefavirales</taxon>
        <taxon>Baculoviridae</taxon>
        <taxon>Alphabaculovirus</taxon>
        <taxon>Alphabaculovirus maconfiguratae</taxon>
    </lineage>
</organism>
<proteinExistence type="inferred from homology"/>
<dbReference type="EC" id="3.4.22.50"/>
<dbReference type="EMBL" id="U59461">
    <property type="protein sequence ID" value="AAM09141.1"/>
    <property type="molecule type" value="Genomic_DNA"/>
</dbReference>
<dbReference type="SMR" id="Q8QLK1"/>
<dbReference type="MEROPS" id="C01.083"/>
<dbReference type="KEGG" id="vg:935864"/>
<dbReference type="Proteomes" id="UP000202529">
    <property type="component" value="Genome"/>
</dbReference>
<dbReference type="GO" id="GO:0008234">
    <property type="term" value="F:cysteine-type peptidase activity"/>
    <property type="evidence" value="ECO:0007669"/>
    <property type="project" value="UniProtKB-KW"/>
</dbReference>
<dbReference type="GO" id="GO:0006508">
    <property type="term" value="P:proteolysis"/>
    <property type="evidence" value="ECO:0007669"/>
    <property type="project" value="UniProtKB-KW"/>
</dbReference>
<dbReference type="CDD" id="cd02248">
    <property type="entry name" value="Peptidase_C1A"/>
    <property type="match status" value="1"/>
</dbReference>
<dbReference type="Gene3D" id="3.90.70.10">
    <property type="entry name" value="Cysteine proteinases"/>
    <property type="match status" value="1"/>
</dbReference>
<dbReference type="InterPro" id="IPR038765">
    <property type="entry name" value="Papain-like_cys_pep_sf"/>
</dbReference>
<dbReference type="InterPro" id="IPR025661">
    <property type="entry name" value="Pept_asp_AS"/>
</dbReference>
<dbReference type="InterPro" id="IPR000169">
    <property type="entry name" value="Pept_cys_AS"/>
</dbReference>
<dbReference type="InterPro" id="IPR025660">
    <property type="entry name" value="Pept_his_AS"/>
</dbReference>
<dbReference type="InterPro" id="IPR013128">
    <property type="entry name" value="Peptidase_C1A"/>
</dbReference>
<dbReference type="InterPro" id="IPR000668">
    <property type="entry name" value="Peptidase_C1A_C"/>
</dbReference>
<dbReference type="InterPro" id="IPR039417">
    <property type="entry name" value="Peptidase_C1A_papain-like"/>
</dbReference>
<dbReference type="InterPro" id="IPR013201">
    <property type="entry name" value="Prot_inhib_I29"/>
</dbReference>
<dbReference type="PANTHER" id="PTHR12411">
    <property type="entry name" value="CYSTEINE PROTEASE FAMILY C1-RELATED"/>
    <property type="match status" value="1"/>
</dbReference>
<dbReference type="Pfam" id="PF08246">
    <property type="entry name" value="Inhibitor_I29"/>
    <property type="match status" value="1"/>
</dbReference>
<dbReference type="Pfam" id="PF00112">
    <property type="entry name" value="Peptidase_C1"/>
    <property type="match status" value="1"/>
</dbReference>
<dbReference type="PRINTS" id="PR00705">
    <property type="entry name" value="PAPAIN"/>
</dbReference>
<dbReference type="SMART" id="SM00848">
    <property type="entry name" value="Inhibitor_I29"/>
    <property type="match status" value="1"/>
</dbReference>
<dbReference type="SMART" id="SM00645">
    <property type="entry name" value="Pept_C1"/>
    <property type="match status" value="1"/>
</dbReference>
<dbReference type="SUPFAM" id="SSF54001">
    <property type="entry name" value="Cysteine proteinases"/>
    <property type="match status" value="1"/>
</dbReference>
<dbReference type="PROSITE" id="PS00640">
    <property type="entry name" value="THIOL_PROTEASE_ASN"/>
    <property type="match status" value="1"/>
</dbReference>
<dbReference type="PROSITE" id="PS00139">
    <property type="entry name" value="THIOL_PROTEASE_CYS"/>
    <property type="match status" value="1"/>
</dbReference>
<dbReference type="PROSITE" id="PS00639">
    <property type="entry name" value="THIOL_PROTEASE_HIS"/>
    <property type="match status" value="1"/>
</dbReference>
<sequence>MNKILILLLLVSAVLTSHDQVVAVTIKPNLYNINSAPLYFEKFISQYNKQYSSEDEKKYRYNIFRHNIESINAKNSRNDSAVYKINRFADMTKNEVVNRHTGLASGDIGANFCETIVVDGPGQRQRPANFDWRNYNKVTSVKDQGMCGACWAFAGLGALESQYAIKYDRLIDLAEQQLVDCDFVDMGCDGGLIHTAYEQIMHIGGVEQEYDYPYKAVRLPCAVKPHKFAVGVRNCYRYVLLSEERLEDLLRHVGPIAIAVDAVDLTDYYGGVISFCENNGLNHAVLLVGYGIENNVPYWTIKNSWGSDYGENGYVRIRRGVNSCGMINELASSAQIA</sequence>
<comment type="function">
    <text evidence="1">Cysteine protease that plays an essential role in host liquefaction to facilitate horizontal transmission of the virus. May participate in the degradation of foreign protein expressed by the baculovirus system (By similarity).</text>
</comment>
<comment type="catalytic activity">
    <reaction>
        <text>Endopeptidase of broad specificity, hydrolyzing substrates of both cathepsin L and cathepsin B.</text>
        <dbReference type="EC" id="3.4.22.50"/>
    </reaction>
</comment>
<comment type="PTM">
    <text evidence="1">Synthesized as an inactive proenzyme and activated by proteolytic removal of the inhibitory propeptide.</text>
</comment>
<comment type="similarity">
    <text evidence="3 4 5">Belongs to the peptidase C1 family.</text>
</comment>
<gene>
    <name type="primary">VCATH</name>
</gene>